<evidence type="ECO:0000255" key="1">
    <source>
        <dbReference type="HAMAP-Rule" id="MF_00436"/>
    </source>
</evidence>
<evidence type="ECO:0000255" key="2">
    <source>
        <dbReference type="PROSITE-ProRule" id="PRU01346"/>
    </source>
</evidence>
<evidence type="ECO:0000256" key="3">
    <source>
        <dbReference type="SAM" id="MobiDB-lite"/>
    </source>
</evidence>
<protein>
    <recommendedName>
        <fullName evidence="1">RNA-binding protein Hfq</fullName>
    </recommendedName>
</protein>
<reference key="1">
    <citation type="journal article" date="2008" name="Environ. Microbiol.">
        <title>The genome of Erwinia tasmaniensis strain Et1/99, a non-pathogenic bacterium in the genus Erwinia.</title>
        <authorList>
            <person name="Kube M."/>
            <person name="Migdoll A.M."/>
            <person name="Mueller I."/>
            <person name="Kuhl H."/>
            <person name="Beck A."/>
            <person name="Reinhardt R."/>
            <person name="Geider K."/>
        </authorList>
    </citation>
    <scope>NUCLEOTIDE SEQUENCE [LARGE SCALE GENOMIC DNA]</scope>
    <source>
        <strain>DSM 17950 / CFBP 7177 / CIP 109463 / NCPPB 4357 / Et1/99</strain>
    </source>
</reference>
<feature type="chain" id="PRO_1000190322" description="RNA-binding protein Hfq">
    <location>
        <begin position="1"/>
        <end position="102"/>
    </location>
</feature>
<feature type="domain" description="Sm" evidence="2">
    <location>
        <begin position="9"/>
        <end position="68"/>
    </location>
</feature>
<feature type="region of interest" description="Disordered" evidence="3">
    <location>
        <begin position="63"/>
        <end position="102"/>
    </location>
</feature>
<feature type="compositionally biased region" description="Low complexity" evidence="3">
    <location>
        <begin position="70"/>
        <end position="102"/>
    </location>
</feature>
<name>HFQ_ERWT9</name>
<organism>
    <name type="scientific">Erwinia tasmaniensis (strain DSM 17950 / CFBP 7177 / CIP 109463 / NCPPB 4357 / Et1/99)</name>
    <dbReference type="NCBI Taxonomy" id="465817"/>
    <lineage>
        <taxon>Bacteria</taxon>
        <taxon>Pseudomonadati</taxon>
        <taxon>Pseudomonadota</taxon>
        <taxon>Gammaproteobacteria</taxon>
        <taxon>Enterobacterales</taxon>
        <taxon>Erwiniaceae</taxon>
        <taxon>Erwinia</taxon>
    </lineage>
</organism>
<proteinExistence type="inferred from homology"/>
<comment type="function">
    <text evidence="1">RNA chaperone that binds small regulatory RNA (sRNAs) and mRNAs to facilitate mRNA translational regulation in response to envelope stress, environmental stress and changes in metabolite concentrations. Also binds with high specificity to tRNAs.</text>
</comment>
<comment type="subunit">
    <text evidence="1">Homohexamer.</text>
</comment>
<comment type="similarity">
    <text evidence="1">Belongs to the Hfq family.</text>
</comment>
<keyword id="KW-1185">Reference proteome</keyword>
<keyword id="KW-0694">RNA-binding</keyword>
<keyword id="KW-0346">Stress response</keyword>
<sequence>MAKGQSLQDPFLNALRRERVPVSIYLVNGIKLQGQIESFDQFVILLKNTVSQMVYKHAISTVVPSRPVSHHSNNTGGGSNNYHHGSSPAPSSQPQQDSADAE</sequence>
<accession>B2VCX3</accession>
<gene>
    <name evidence="1" type="primary">hfq</name>
    <name type="ordered locus">ETA_29670</name>
</gene>
<dbReference type="EMBL" id="CU468135">
    <property type="protein sequence ID" value="CAO98013.1"/>
    <property type="molecule type" value="Genomic_DNA"/>
</dbReference>
<dbReference type="RefSeq" id="WP_012442665.1">
    <property type="nucleotide sequence ID" value="NC_010694.1"/>
</dbReference>
<dbReference type="SMR" id="B2VCX3"/>
<dbReference type="STRING" id="465817.ETA_29670"/>
<dbReference type="KEGG" id="eta:ETA_29670"/>
<dbReference type="eggNOG" id="COG1923">
    <property type="taxonomic scope" value="Bacteria"/>
</dbReference>
<dbReference type="HOGENOM" id="CLU_113688_2_1_6"/>
<dbReference type="OrthoDB" id="9799751at2"/>
<dbReference type="Proteomes" id="UP000001726">
    <property type="component" value="Chromosome"/>
</dbReference>
<dbReference type="GO" id="GO:0005829">
    <property type="term" value="C:cytosol"/>
    <property type="evidence" value="ECO:0007669"/>
    <property type="project" value="TreeGrafter"/>
</dbReference>
<dbReference type="GO" id="GO:0003723">
    <property type="term" value="F:RNA binding"/>
    <property type="evidence" value="ECO:0007669"/>
    <property type="project" value="UniProtKB-UniRule"/>
</dbReference>
<dbReference type="GO" id="GO:0006355">
    <property type="term" value="P:regulation of DNA-templated transcription"/>
    <property type="evidence" value="ECO:0007669"/>
    <property type="project" value="InterPro"/>
</dbReference>
<dbReference type="GO" id="GO:0043487">
    <property type="term" value="P:regulation of RNA stability"/>
    <property type="evidence" value="ECO:0007669"/>
    <property type="project" value="TreeGrafter"/>
</dbReference>
<dbReference type="GO" id="GO:0045974">
    <property type="term" value="P:regulation of translation, ncRNA-mediated"/>
    <property type="evidence" value="ECO:0007669"/>
    <property type="project" value="TreeGrafter"/>
</dbReference>
<dbReference type="CDD" id="cd01716">
    <property type="entry name" value="Hfq"/>
    <property type="match status" value="1"/>
</dbReference>
<dbReference type="FunFam" id="2.30.30.100:FF:000001">
    <property type="entry name" value="RNA-binding protein Hfq"/>
    <property type="match status" value="1"/>
</dbReference>
<dbReference type="Gene3D" id="2.30.30.100">
    <property type="match status" value="1"/>
</dbReference>
<dbReference type="HAMAP" id="MF_00436">
    <property type="entry name" value="Hfq"/>
    <property type="match status" value="1"/>
</dbReference>
<dbReference type="InterPro" id="IPR005001">
    <property type="entry name" value="Hfq"/>
</dbReference>
<dbReference type="InterPro" id="IPR010920">
    <property type="entry name" value="LSM_dom_sf"/>
</dbReference>
<dbReference type="InterPro" id="IPR047575">
    <property type="entry name" value="Sm"/>
</dbReference>
<dbReference type="NCBIfam" id="TIGR02383">
    <property type="entry name" value="Hfq"/>
    <property type="match status" value="1"/>
</dbReference>
<dbReference type="NCBIfam" id="NF001602">
    <property type="entry name" value="PRK00395.1"/>
    <property type="match status" value="1"/>
</dbReference>
<dbReference type="PANTHER" id="PTHR34772">
    <property type="entry name" value="RNA-BINDING PROTEIN HFQ"/>
    <property type="match status" value="1"/>
</dbReference>
<dbReference type="PANTHER" id="PTHR34772:SF1">
    <property type="entry name" value="RNA-BINDING PROTEIN HFQ"/>
    <property type="match status" value="1"/>
</dbReference>
<dbReference type="Pfam" id="PF17209">
    <property type="entry name" value="Hfq"/>
    <property type="match status" value="1"/>
</dbReference>
<dbReference type="SUPFAM" id="SSF50182">
    <property type="entry name" value="Sm-like ribonucleoproteins"/>
    <property type="match status" value="1"/>
</dbReference>
<dbReference type="PROSITE" id="PS52002">
    <property type="entry name" value="SM"/>
    <property type="match status" value="1"/>
</dbReference>